<protein>
    <recommendedName>
        <fullName evidence="1 4">DNA gyrase subunit B, novobiocin-resistant</fullName>
        <ecNumber evidence="1">5.6.2.2</ecNumber>
    </recommendedName>
</protein>
<accession>P50074</accession>
<sequence>MTTYDTRTATDTRGSEQPGHVGTASYDANAITVLDGLDAVRKRPGMYIGSTGERGLHHLVQELVDNSVDEALAGVADRIDVTVLADGGVRVVDNGRGIPVGMHPVEKRPAVEVVLTVLHAGGKFGGGGYGVSGGLHGVGLSVVNALSTRLSAEIWTDGHRWTQDYRDGAPTAPLARHEATSRTGTSLTFWADGDIFETTEYSFETLARRHQEMAFLNGGLTLTLTDERSSARATAAVDEADSDPTAKTVSYRYDGGITDFVVHLNARKGEPAHPSVITIAAEDTERLLSAEIALQWNGQYTDSVYSYANAIHTHEGGTHEEGFRTALTTVVNRYAREKRLLRDKDANLSGEDIREGLTAIISVNVGEPQFEGQTKTKLGNTEVRTLLQKIVHEHLADWFDRNPNEAVDIVRKAVQAATARVAARKARDLTRRKGLLETAALPGKLSDCQSNDPATSEIFIVEGDSAGGSAKAGRNPQYQAILPIRGKILNVEKARIDKVLQNQENQALISAFGTGVHEDFDIAKLRYHKIILMADADVDGQHISTLLLTFLFRFMRPLVEEGHVHLSRPPLYKIKWSREHVEYAYSDRERNTLLERGRRDGRRIRDDSIQRFKGLGEMNAEELRVTTMDPDHRVLGQVTLDDAAFADDLFSVLMGEDVEARRHFIQRNAQDVRFLDI</sequence>
<dbReference type="EC" id="5.6.2.2" evidence="1"/>
<dbReference type="EMBL" id="Z17304">
    <property type="protein sequence ID" value="CAA78951.1"/>
    <property type="molecule type" value="Genomic_DNA"/>
</dbReference>
<dbReference type="PIR" id="S29682">
    <property type="entry name" value="S29682"/>
</dbReference>
<dbReference type="SMR" id="P50074"/>
<dbReference type="GO" id="GO:0005694">
    <property type="term" value="C:chromosome"/>
    <property type="evidence" value="ECO:0007669"/>
    <property type="project" value="InterPro"/>
</dbReference>
<dbReference type="GO" id="GO:0005737">
    <property type="term" value="C:cytoplasm"/>
    <property type="evidence" value="ECO:0007669"/>
    <property type="project" value="UniProtKB-SubCell"/>
</dbReference>
<dbReference type="GO" id="GO:0005524">
    <property type="term" value="F:ATP binding"/>
    <property type="evidence" value="ECO:0007669"/>
    <property type="project" value="UniProtKB-UniRule"/>
</dbReference>
<dbReference type="GO" id="GO:0003677">
    <property type="term" value="F:DNA binding"/>
    <property type="evidence" value="ECO:0007669"/>
    <property type="project" value="UniProtKB-KW"/>
</dbReference>
<dbReference type="GO" id="GO:0034335">
    <property type="term" value="F:DNA negative supercoiling activity"/>
    <property type="evidence" value="ECO:0007669"/>
    <property type="project" value="UniProtKB-ARBA"/>
</dbReference>
<dbReference type="GO" id="GO:0046872">
    <property type="term" value="F:metal ion binding"/>
    <property type="evidence" value="ECO:0007669"/>
    <property type="project" value="UniProtKB-KW"/>
</dbReference>
<dbReference type="GO" id="GO:0006265">
    <property type="term" value="P:DNA topological change"/>
    <property type="evidence" value="ECO:0007669"/>
    <property type="project" value="UniProtKB-UniRule"/>
</dbReference>
<dbReference type="GO" id="GO:0006261">
    <property type="term" value="P:DNA-templated DNA replication"/>
    <property type="evidence" value="ECO:0007669"/>
    <property type="project" value="UniProtKB-UniRule"/>
</dbReference>
<dbReference type="GO" id="GO:0046677">
    <property type="term" value="P:response to antibiotic"/>
    <property type="evidence" value="ECO:0007669"/>
    <property type="project" value="UniProtKB-KW"/>
</dbReference>
<dbReference type="CDD" id="cd16928">
    <property type="entry name" value="HATPase_GyrB-like"/>
    <property type="match status" value="1"/>
</dbReference>
<dbReference type="CDD" id="cd00822">
    <property type="entry name" value="TopoII_Trans_DNA_gyrase"/>
    <property type="match status" value="1"/>
</dbReference>
<dbReference type="CDD" id="cd03366">
    <property type="entry name" value="TOPRIM_TopoIIA_GyrB"/>
    <property type="match status" value="1"/>
</dbReference>
<dbReference type="FunFam" id="3.30.230.10:FF:000005">
    <property type="entry name" value="DNA gyrase subunit B"/>
    <property type="match status" value="1"/>
</dbReference>
<dbReference type="FunFam" id="3.30.565.10:FF:000002">
    <property type="entry name" value="DNA gyrase subunit B"/>
    <property type="match status" value="1"/>
</dbReference>
<dbReference type="FunFam" id="3.40.50.670:FF:000002">
    <property type="entry name" value="DNA gyrase subunit B"/>
    <property type="match status" value="1"/>
</dbReference>
<dbReference type="Gene3D" id="3.30.230.10">
    <property type="match status" value="1"/>
</dbReference>
<dbReference type="Gene3D" id="3.40.50.670">
    <property type="match status" value="1"/>
</dbReference>
<dbReference type="Gene3D" id="3.30.565.10">
    <property type="entry name" value="Histidine kinase-like ATPase, C-terminal domain"/>
    <property type="match status" value="1"/>
</dbReference>
<dbReference type="HAMAP" id="MF_01898">
    <property type="entry name" value="GyrB"/>
    <property type="match status" value="1"/>
</dbReference>
<dbReference type="InterPro" id="IPR002288">
    <property type="entry name" value="DNA_gyrase_B_C"/>
</dbReference>
<dbReference type="InterPro" id="IPR011557">
    <property type="entry name" value="GyrB"/>
</dbReference>
<dbReference type="InterPro" id="IPR036890">
    <property type="entry name" value="HATPase_C_sf"/>
</dbReference>
<dbReference type="InterPro" id="IPR020568">
    <property type="entry name" value="Ribosomal_Su5_D2-typ_SF"/>
</dbReference>
<dbReference type="InterPro" id="IPR014721">
    <property type="entry name" value="Ribsml_uS5_D2-typ_fold_subgr"/>
</dbReference>
<dbReference type="InterPro" id="IPR001241">
    <property type="entry name" value="Topo_IIA"/>
</dbReference>
<dbReference type="InterPro" id="IPR013760">
    <property type="entry name" value="Topo_IIA-like_dom_sf"/>
</dbReference>
<dbReference type="InterPro" id="IPR000565">
    <property type="entry name" value="Topo_IIA_B"/>
</dbReference>
<dbReference type="InterPro" id="IPR013759">
    <property type="entry name" value="Topo_IIA_B_C"/>
</dbReference>
<dbReference type="InterPro" id="IPR013506">
    <property type="entry name" value="Topo_IIA_bsu_dom2"/>
</dbReference>
<dbReference type="InterPro" id="IPR018522">
    <property type="entry name" value="TopoIIA_CS"/>
</dbReference>
<dbReference type="InterPro" id="IPR006171">
    <property type="entry name" value="TOPRIM_dom"/>
</dbReference>
<dbReference type="InterPro" id="IPR034160">
    <property type="entry name" value="TOPRIM_GyrB"/>
</dbReference>
<dbReference type="NCBIfam" id="TIGR01059">
    <property type="entry name" value="gyrB"/>
    <property type="match status" value="1"/>
</dbReference>
<dbReference type="NCBIfam" id="NF004189">
    <property type="entry name" value="PRK05644.1"/>
    <property type="match status" value="1"/>
</dbReference>
<dbReference type="NCBIfam" id="NF011501">
    <property type="entry name" value="PRK14939.1"/>
    <property type="match status" value="1"/>
</dbReference>
<dbReference type="PANTHER" id="PTHR45866:SF1">
    <property type="entry name" value="DNA GYRASE SUBUNIT B, MITOCHONDRIAL"/>
    <property type="match status" value="1"/>
</dbReference>
<dbReference type="PANTHER" id="PTHR45866">
    <property type="entry name" value="DNA GYRASE/TOPOISOMERASE SUBUNIT B"/>
    <property type="match status" value="1"/>
</dbReference>
<dbReference type="Pfam" id="PF00204">
    <property type="entry name" value="DNA_gyraseB"/>
    <property type="match status" value="1"/>
</dbReference>
<dbReference type="Pfam" id="PF00986">
    <property type="entry name" value="DNA_gyraseB_C"/>
    <property type="match status" value="1"/>
</dbReference>
<dbReference type="Pfam" id="PF02518">
    <property type="entry name" value="HATPase_c"/>
    <property type="match status" value="1"/>
</dbReference>
<dbReference type="Pfam" id="PF01751">
    <property type="entry name" value="Toprim"/>
    <property type="match status" value="1"/>
</dbReference>
<dbReference type="PRINTS" id="PR01159">
    <property type="entry name" value="DNAGYRASEB"/>
</dbReference>
<dbReference type="PRINTS" id="PR00418">
    <property type="entry name" value="TPI2FAMILY"/>
</dbReference>
<dbReference type="SMART" id="SM00387">
    <property type="entry name" value="HATPase_c"/>
    <property type="match status" value="1"/>
</dbReference>
<dbReference type="SMART" id="SM00433">
    <property type="entry name" value="TOP2c"/>
    <property type="match status" value="1"/>
</dbReference>
<dbReference type="SUPFAM" id="SSF55874">
    <property type="entry name" value="ATPase domain of HSP90 chaperone/DNA topoisomerase II/histidine kinase"/>
    <property type="match status" value="1"/>
</dbReference>
<dbReference type="SUPFAM" id="SSF54211">
    <property type="entry name" value="Ribosomal protein S5 domain 2-like"/>
    <property type="match status" value="1"/>
</dbReference>
<dbReference type="SUPFAM" id="SSF56719">
    <property type="entry name" value="Type II DNA topoisomerase"/>
    <property type="match status" value="1"/>
</dbReference>
<dbReference type="PROSITE" id="PS00177">
    <property type="entry name" value="TOPOISOMERASE_II"/>
    <property type="match status" value="1"/>
</dbReference>
<dbReference type="PROSITE" id="PS50880">
    <property type="entry name" value="TOPRIM"/>
    <property type="match status" value="1"/>
</dbReference>
<reference key="1">
    <citation type="journal article" date="1993" name="Mol. Microbiol.">
        <title>Expression and analysis of two gyrB genes from the novobiocin producer, Streptomyces sphaeroides.</title>
        <authorList>
            <person name="Thiara A.S."/>
            <person name="Cundliffe E."/>
        </authorList>
    </citation>
    <scope>NUCLEOTIDE SEQUENCE [GENOMIC DNA]</scope>
    <scope>INDUCTION</scope>
    <scope>ANTIBIOTIC RESISTANCE</scope>
    <source>
        <strain>ATCC 23965 / DSM 40292 / JCM 4252 / NBRC 12917 / NCIMB 11891 / NRRL 2449</strain>
    </source>
</reference>
<name>GYRBR_STRNV</name>
<keyword id="KW-0046">Antibiotic resistance</keyword>
<keyword id="KW-0067">ATP-binding</keyword>
<keyword id="KW-0963">Cytoplasm</keyword>
<keyword id="KW-0238">DNA-binding</keyword>
<keyword id="KW-0413">Isomerase</keyword>
<keyword id="KW-0460">Magnesium</keyword>
<keyword id="KW-0479">Metal-binding</keyword>
<keyword id="KW-0547">Nucleotide-binding</keyword>
<keyword id="KW-0799">Topoisomerase</keyword>
<comment type="function">
    <text evidence="1">A type II topoisomerase that negatively supercoils closed circular double-stranded (ds) DNA in an ATP-dependent manner to modulate DNA topology and maintain chromosomes in an underwound state. Negative supercoiling favors strand separation, and DNA replication, transcription, recombination and repair, all of which involve strand separation. Also able to catalyze the interconversion of other topological isomers of dsDNA rings, including catenanes and knotted rings. Type II topoisomerases break and join 2 DNA strands simultaneously in an ATP-dependent manner.</text>
</comment>
<comment type="catalytic activity">
    <reaction evidence="1">
        <text>ATP-dependent breakage, passage and rejoining of double-stranded DNA.</text>
        <dbReference type="EC" id="5.6.2.2"/>
    </reaction>
</comment>
<comment type="cofactor">
    <cofactor evidence="1">
        <name>Mg(2+)</name>
        <dbReference type="ChEBI" id="CHEBI:18420"/>
    </cofactor>
    <cofactor evidence="1">
        <name>Mn(2+)</name>
        <dbReference type="ChEBI" id="CHEBI:29035"/>
    </cofactor>
    <cofactor evidence="1">
        <name>Ca(2+)</name>
        <dbReference type="ChEBI" id="CHEBI:29108"/>
    </cofactor>
    <text evidence="1">Binds two Mg(2+) per subunit. The magnesium ions form salt bridges with both the protein and the DNA. Can also accept other divalent metal cations, such as Mn(2+) or Ca(2+).</text>
</comment>
<comment type="subunit">
    <text evidence="1">Heterotetramer, composed of two GyrA and two GyrB chains. In the heterotetramer, GyrA contains the active site tyrosine that forms a transient covalent intermediate with DNA, while GyrB binds cofactors and catalyzes ATP hydrolysis.</text>
</comment>
<comment type="subcellular location">
    <subcellularLocation>
        <location evidence="1">Cytoplasm</location>
    </subcellularLocation>
</comment>
<comment type="induction">
    <text evidence="3">By novobiocin and repressed by sucrose.</text>
</comment>
<comment type="miscellaneous">
    <text evidence="3">There are two genes for gyrB in this organism. One which is novobiocin-sensitive (gyrBS) and one which is resistant (gyrBR).</text>
</comment>
<comment type="miscellaneous">
    <text evidence="1">Few gyrases are as efficient as E.coli at forming negative supercoils. Not all organisms have 2 type II topoisomerases; in organisms with a single type II topoisomerase this enzyme also has to decatenate newly replicated chromosomes.</text>
</comment>
<comment type="similarity">
    <text evidence="1">Belongs to the type II topoisomerase GyrB family.</text>
</comment>
<feature type="chain" id="PRO_0000145353" description="DNA gyrase subunit B, novobiocin-resistant">
    <location>
        <begin position="1"/>
        <end position="677"/>
    </location>
</feature>
<feature type="domain" description="Toprim" evidence="1">
    <location>
        <begin position="456"/>
        <end position="570"/>
    </location>
</feature>
<feature type="region of interest" description="Disordered" evidence="2">
    <location>
        <begin position="1"/>
        <end position="23"/>
    </location>
</feature>
<feature type="region of interest" description="Novobiocin-binding">
    <location>
        <begin position="154"/>
        <end position="295"/>
    </location>
</feature>
<feature type="binding site" evidence="1">
    <location>
        <position position="462"/>
    </location>
    <ligand>
        <name>Mg(2+)</name>
        <dbReference type="ChEBI" id="CHEBI:18420"/>
        <label>1</label>
        <note>catalytic</note>
    </ligand>
</feature>
<feature type="binding site" evidence="1">
    <location>
        <position position="535"/>
    </location>
    <ligand>
        <name>Mg(2+)</name>
        <dbReference type="ChEBI" id="CHEBI:18420"/>
        <label>1</label>
        <note>catalytic</note>
    </ligand>
</feature>
<feature type="binding site" evidence="1">
    <location>
        <position position="535"/>
    </location>
    <ligand>
        <name>Mg(2+)</name>
        <dbReference type="ChEBI" id="CHEBI:18420"/>
        <label>2</label>
    </ligand>
</feature>
<feature type="binding site" evidence="1">
    <location>
        <position position="537"/>
    </location>
    <ligand>
        <name>Mg(2+)</name>
        <dbReference type="ChEBI" id="CHEBI:18420"/>
        <label>2</label>
    </ligand>
</feature>
<feature type="site" description="Interaction with DNA" evidence="1">
    <location>
        <position position="487"/>
    </location>
</feature>
<feature type="site" description="Interaction with DNA" evidence="1">
    <location>
        <position position="490"/>
    </location>
</feature>
<proteinExistence type="evidence at transcript level"/>
<organism>
    <name type="scientific">Streptomyces niveus</name>
    <name type="common">Streptomyces spheroides</name>
    <dbReference type="NCBI Taxonomy" id="193462"/>
    <lineage>
        <taxon>Bacteria</taxon>
        <taxon>Bacillati</taxon>
        <taxon>Actinomycetota</taxon>
        <taxon>Actinomycetes</taxon>
        <taxon>Kitasatosporales</taxon>
        <taxon>Streptomycetaceae</taxon>
        <taxon>Streptomyces</taxon>
    </lineage>
</organism>
<evidence type="ECO:0000255" key="1">
    <source>
        <dbReference type="HAMAP-Rule" id="MF_01898"/>
    </source>
</evidence>
<evidence type="ECO:0000256" key="2">
    <source>
        <dbReference type="SAM" id="MobiDB-lite"/>
    </source>
</evidence>
<evidence type="ECO:0000269" key="3">
    <source>
    </source>
</evidence>
<evidence type="ECO:0000303" key="4">
    <source>
    </source>
</evidence>
<gene>
    <name evidence="1" type="primary">gyrBR</name>
</gene>